<organism>
    <name type="scientific">Bos taurus</name>
    <name type="common">Bovine</name>
    <dbReference type="NCBI Taxonomy" id="9913"/>
    <lineage>
        <taxon>Eukaryota</taxon>
        <taxon>Metazoa</taxon>
        <taxon>Chordata</taxon>
        <taxon>Craniata</taxon>
        <taxon>Vertebrata</taxon>
        <taxon>Euteleostomi</taxon>
        <taxon>Mammalia</taxon>
        <taxon>Eutheria</taxon>
        <taxon>Laurasiatheria</taxon>
        <taxon>Artiodactyla</taxon>
        <taxon>Ruminantia</taxon>
        <taxon>Pecora</taxon>
        <taxon>Bovidae</taxon>
        <taxon>Bovinae</taxon>
        <taxon>Bos</taxon>
    </lineage>
</organism>
<dbReference type="EMBL" id="BC110030">
    <property type="protein sequence ID" value="AAI10031.1"/>
    <property type="molecule type" value="mRNA"/>
</dbReference>
<dbReference type="RefSeq" id="NP_001033164.1">
    <property type="nucleotide sequence ID" value="NM_001038075.1"/>
</dbReference>
<dbReference type="RefSeq" id="XP_005205464.1">
    <property type="nucleotide sequence ID" value="XM_005205407.5"/>
</dbReference>
<dbReference type="RefSeq" id="XP_005205465.1">
    <property type="nucleotide sequence ID" value="XM_005205408.5"/>
</dbReference>
<dbReference type="SMR" id="Q32KL9"/>
<dbReference type="FunCoup" id="Q32KL9">
    <property type="interactions" value="2256"/>
</dbReference>
<dbReference type="PaxDb" id="9913-ENSBTAP00000029129"/>
<dbReference type="Ensembl" id="ENSBTAT00000029129.7">
    <property type="protein sequence ID" value="ENSBTAP00000029129.5"/>
    <property type="gene ID" value="ENSBTAG00000021849.7"/>
</dbReference>
<dbReference type="GeneID" id="511018"/>
<dbReference type="KEGG" id="bta:511018"/>
<dbReference type="CTD" id="55973"/>
<dbReference type="VEuPathDB" id="HostDB:ENSBTAG00000021849"/>
<dbReference type="VGNC" id="VGNC:28247">
    <property type="gene designation" value="DUS4L"/>
</dbReference>
<dbReference type="eggNOG" id="KOG1962">
    <property type="taxonomic scope" value="Eukaryota"/>
</dbReference>
<dbReference type="GeneTree" id="ENSGT00550000074907"/>
<dbReference type="HOGENOM" id="CLU_070975_1_0_1"/>
<dbReference type="InParanoid" id="Q32KL9"/>
<dbReference type="OrthoDB" id="435607at2759"/>
<dbReference type="TreeFam" id="TF315310"/>
<dbReference type="Proteomes" id="UP000009136">
    <property type="component" value="Chromosome 4"/>
</dbReference>
<dbReference type="Bgee" id="ENSBTAG00000021849">
    <property type="expression patterns" value="Expressed in spermatid and 104 other cell types or tissues"/>
</dbReference>
<dbReference type="GO" id="GO:0005789">
    <property type="term" value="C:endoplasmic reticulum membrane"/>
    <property type="evidence" value="ECO:0000318"/>
    <property type="project" value="GO_Central"/>
</dbReference>
<dbReference type="GO" id="GO:0006915">
    <property type="term" value="P:apoptotic process"/>
    <property type="evidence" value="ECO:0007669"/>
    <property type="project" value="UniProtKB-KW"/>
</dbReference>
<dbReference type="GO" id="GO:0006888">
    <property type="term" value="P:endoplasmic reticulum to Golgi vesicle-mediated transport"/>
    <property type="evidence" value="ECO:0000318"/>
    <property type="project" value="GO_Central"/>
</dbReference>
<dbReference type="GO" id="GO:0006886">
    <property type="term" value="P:intracellular protein transport"/>
    <property type="evidence" value="ECO:0007669"/>
    <property type="project" value="InterPro"/>
</dbReference>
<dbReference type="GO" id="GO:0070973">
    <property type="term" value="P:protein localization to endoplasmic reticulum exit site"/>
    <property type="evidence" value="ECO:0000318"/>
    <property type="project" value="GO_Central"/>
</dbReference>
<dbReference type="FunFam" id="1.20.5.110:FF:000011">
    <property type="entry name" value="B-cell receptor-associated protein 29"/>
    <property type="match status" value="1"/>
</dbReference>
<dbReference type="Gene3D" id="1.20.5.110">
    <property type="match status" value="1"/>
</dbReference>
<dbReference type="InterPro" id="IPR008417">
    <property type="entry name" value="BAP29/BAP31"/>
</dbReference>
<dbReference type="InterPro" id="IPR040463">
    <property type="entry name" value="BAP29/BAP31_N"/>
</dbReference>
<dbReference type="InterPro" id="IPR041672">
    <property type="entry name" value="Bap31/Bap29_C"/>
</dbReference>
<dbReference type="PANTHER" id="PTHR12701:SF5">
    <property type="entry name" value="B-CELL RECEPTOR-ASSOCIATED PROTEIN 29"/>
    <property type="match status" value="1"/>
</dbReference>
<dbReference type="PANTHER" id="PTHR12701">
    <property type="entry name" value="BCR-ASSOCIATED PROTEIN, BAP"/>
    <property type="match status" value="1"/>
</dbReference>
<dbReference type="Pfam" id="PF05529">
    <property type="entry name" value="Bap31"/>
    <property type="match status" value="1"/>
</dbReference>
<dbReference type="Pfam" id="PF18035">
    <property type="entry name" value="Bap31_Bap29_C"/>
    <property type="match status" value="1"/>
</dbReference>
<sequence length="240" mass="28212">MTLQWTAVATFLYAEIGLILIFCLPFIPPQRWQKIFSFSVWGKIASFWNKAFLTIIILLIVLFLDAVREVRKYSSTHTIEKSSASRPAAYEHTQMKLFRSQRNLYISGFSLFFWLVLRRLVTLITQLAKELSHKGVLKHQAENINQAAKKFMEENERLKRLLKNYGKEEEHILEAENKKLEEDKEKLKTELKKASDALSKAQNDVMIMKMQSERLSKEYDRLLREHSELQDRAGKDKKCL</sequence>
<reference key="1">
    <citation type="submission" date="2005-11" db="EMBL/GenBank/DDBJ databases">
        <authorList>
            <consortium name="NIH - Mammalian Gene Collection (MGC) project"/>
        </authorList>
    </citation>
    <scope>NUCLEOTIDE SEQUENCE [LARGE SCALE MRNA]</scope>
    <source>
        <strain>Crossbred X Angus</strain>
        <tissue>Liver</tissue>
    </source>
</reference>
<feature type="chain" id="PRO_0000327212" description="B-cell receptor-associated protein 29">
    <location>
        <begin position="1"/>
        <end position="240"/>
    </location>
</feature>
<feature type="topological domain" description="Lumenal" evidence="2">
    <location>
        <begin position="1"/>
        <end position="6"/>
    </location>
</feature>
<feature type="transmembrane region" description="Helical" evidence="2">
    <location>
        <begin position="7"/>
        <end position="27"/>
    </location>
</feature>
<feature type="topological domain" description="Cytoplasmic" evidence="2">
    <location>
        <begin position="28"/>
        <end position="43"/>
    </location>
</feature>
<feature type="transmembrane region" description="Helical" evidence="2">
    <location>
        <begin position="44"/>
        <end position="64"/>
    </location>
</feature>
<feature type="topological domain" description="Lumenal" evidence="2">
    <location>
        <begin position="65"/>
        <end position="103"/>
    </location>
</feature>
<feature type="transmembrane region" description="Helical" evidence="2">
    <location>
        <begin position="104"/>
        <end position="124"/>
    </location>
</feature>
<feature type="topological domain" description="Cytoplasmic" evidence="2">
    <location>
        <begin position="125"/>
        <end position="240"/>
    </location>
</feature>
<feature type="coiled-coil region" evidence="1">
    <location>
        <begin position="166"/>
        <end position="233"/>
    </location>
</feature>
<feature type="short sequence motif" description="Di-lysine motif">
    <location>
        <begin position="237"/>
        <end position="240"/>
    </location>
</feature>
<accession>Q32KL9</accession>
<gene>
    <name type="primary">BCAP29</name>
</gene>
<evidence type="ECO:0000250" key="1"/>
<evidence type="ECO:0000255" key="2"/>
<evidence type="ECO:0000305" key="3"/>
<keyword id="KW-0053">Apoptosis</keyword>
<keyword id="KW-0175">Coiled coil</keyword>
<keyword id="KW-0256">Endoplasmic reticulum</keyword>
<keyword id="KW-0931">ER-Golgi transport</keyword>
<keyword id="KW-0472">Membrane</keyword>
<keyword id="KW-0653">Protein transport</keyword>
<keyword id="KW-1185">Reference proteome</keyword>
<keyword id="KW-0812">Transmembrane</keyword>
<keyword id="KW-1133">Transmembrane helix</keyword>
<keyword id="KW-0813">Transport</keyword>
<protein>
    <recommendedName>
        <fullName>B-cell receptor-associated protein 29</fullName>
        <shortName>BCR-associated protein 29</shortName>
        <shortName>Bap29</shortName>
    </recommendedName>
</protein>
<proteinExistence type="evidence at transcript level"/>
<comment type="function">
    <text evidence="1">May play a role in anterograde transport of membrane proteins from the endoplasmic reticulum to the Golgi. May be involved in CASP8-mediated apoptosis (By similarity).</text>
</comment>
<comment type="subunit">
    <text evidence="1">Homodimer and heterodimer with BCAP31. Binds CASP8 as a complex containing BCAP31, BCAP29, BCL2 and/or BCL2L1. Interacts with VAMP3, VAMP1 and membrane IgD immunoglobulins. May interact with ACTG1 and non-muscle myosin II (By similarity).</text>
</comment>
<comment type="subcellular location">
    <subcellularLocation>
        <location evidence="1">Endoplasmic reticulum membrane</location>
        <topology evidence="1">Multi-pass membrane protein</topology>
    </subcellularLocation>
</comment>
<comment type="similarity">
    <text evidence="3">Belongs to the BCAP29/BCAP31 family.</text>
</comment>
<name>BAP29_BOVIN</name>